<dbReference type="EC" id="7.3.2.2" evidence="1"/>
<dbReference type="EMBL" id="AM260480">
    <property type="protein sequence ID" value="CAJ96086.1"/>
    <property type="molecule type" value="Genomic_DNA"/>
</dbReference>
<dbReference type="RefSeq" id="WP_011617129.1">
    <property type="nucleotide sequence ID" value="NC_008314.1"/>
</dbReference>
<dbReference type="SMR" id="Q0K1N8"/>
<dbReference type="STRING" id="381666.H16_B1296"/>
<dbReference type="KEGG" id="reh:H16_B1296"/>
<dbReference type="eggNOG" id="COG3638">
    <property type="taxonomic scope" value="Bacteria"/>
</dbReference>
<dbReference type="HOGENOM" id="CLU_000604_1_22_4"/>
<dbReference type="OrthoDB" id="9802264at2"/>
<dbReference type="Proteomes" id="UP000008210">
    <property type="component" value="Chromosome 2"/>
</dbReference>
<dbReference type="GO" id="GO:0005886">
    <property type="term" value="C:plasma membrane"/>
    <property type="evidence" value="ECO:0007669"/>
    <property type="project" value="UniProtKB-SubCell"/>
</dbReference>
<dbReference type="GO" id="GO:0015416">
    <property type="term" value="F:ABC-type phosphonate transporter activity"/>
    <property type="evidence" value="ECO:0007669"/>
    <property type="project" value="UniProtKB-EC"/>
</dbReference>
<dbReference type="GO" id="GO:0005524">
    <property type="term" value="F:ATP binding"/>
    <property type="evidence" value="ECO:0007669"/>
    <property type="project" value="UniProtKB-KW"/>
</dbReference>
<dbReference type="GO" id="GO:0016887">
    <property type="term" value="F:ATP hydrolysis activity"/>
    <property type="evidence" value="ECO:0007669"/>
    <property type="project" value="InterPro"/>
</dbReference>
<dbReference type="CDD" id="cd03256">
    <property type="entry name" value="ABC_PhnC_transporter"/>
    <property type="match status" value="1"/>
</dbReference>
<dbReference type="Gene3D" id="3.40.50.300">
    <property type="entry name" value="P-loop containing nucleotide triphosphate hydrolases"/>
    <property type="match status" value="1"/>
</dbReference>
<dbReference type="InterPro" id="IPR003593">
    <property type="entry name" value="AAA+_ATPase"/>
</dbReference>
<dbReference type="InterPro" id="IPR003439">
    <property type="entry name" value="ABC_transporter-like_ATP-bd"/>
</dbReference>
<dbReference type="InterPro" id="IPR017871">
    <property type="entry name" value="ABC_transporter-like_CS"/>
</dbReference>
<dbReference type="InterPro" id="IPR012693">
    <property type="entry name" value="ABC_transpr_PhnC"/>
</dbReference>
<dbReference type="InterPro" id="IPR050086">
    <property type="entry name" value="MetN_ABC_transporter-like"/>
</dbReference>
<dbReference type="InterPro" id="IPR027417">
    <property type="entry name" value="P-loop_NTPase"/>
</dbReference>
<dbReference type="NCBIfam" id="TIGR02315">
    <property type="entry name" value="ABC_phnC"/>
    <property type="match status" value="1"/>
</dbReference>
<dbReference type="PANTHER" id="PTHR43166">
    <property type="entry name" value="AMINO ACID IMPORT ATP-BINDING PROTEIN"/>
    <property type="match status" value="1"/>
</dbReference>
<dbReference type="PANTHER" id="PTHR43166:SF6">
    <property type="entry name" value="PHOSPHONATES IMPORT ATP-BINDING PROTEIN PHNC"/>
    <property type="match status" value="1"/>
</dbReference>
<dbReference type="Pfam" id="PF00005">
    <property type="entry name" value="ABC_tran"/>
    <property type="match status" value="1"/>
</dbReference>
<dbReference type="SMART" id="SM00382">
    <property type="entry name" value="AAA"/>
    <property type="match status" value="1"/>
</dbReference>
<dbReference type="SUPFAM" id="SSF52540">
    <property type="entry name" value="P-loop containing nucleoside triphosphate hydrolases"/>
    <property type="match status" value="1"/>
</dbReference>
<dbReference type="PROSITE" id="PS00211">
    <property type="entry name" value="ABC_TRANSPORTER_1"/>
    <property type="match status" value="1"/>
</dbReference>
<dbReference type="PROSITE" id="PS50893">
    <property type="entry name" value="ABC_TRANSPORTER_2"/>
    <property type="match status" value="1"/>
</dbReference>
<dbReference type="PROSITE" id="PS51249">
    <property type="entry name" value="PHNC"/>
    <property type="match status" value="1"/>
</dbReference>
<proteinExistence type="inferred from homology"/>
<accession>Q0K1N8</accession>
<evidence type="ECO:0000255" key="1">
    <source>
        <dbReference type="HAMAP-Rule" id="MF_01713"/>
    </source>
</evidence>
<organism>
    <name type="scientific">Cupriavidus necator (strain ATCC 17699 / DSM 428 / KCTC 22496 / NCIMB 10442 / H16 / Stanier 337)</name>
    <name type="common">Ralstonia eutropha</name>
    <dbReference type="NCBI Taxonomy" id="381666"/>
    <lineage>
        <taxon>Bacteria</taxon>
        <taxon>Pseudomonadati</taxon>
        <taxon>Pseudomonadota</taxon>
        <taxon>Betaproteobacteria</taxon>
        <taxon>Burkholderiales</taxon>
        <taxon>Burkholderiaceae</taxon>
        <taxon>Cupriavidus</taxon>
    </lineage>
</organism>
<comment type="function">
    <text evidence="1">Part of the ABC transporter complex PhnCDE involved in phosphonates import. Responsible for energy coupling to the transport system.</text>
</comment>
<comment type="catalytic activity">
    <reaction evidence="1">
        <text>phosphonate(out) + ATP + H2O = phosphonate(in) + ADP + phosphate + H(+)</text>
        <dbReference type="Rhea" id="RHEA:18065"/>
        <dbReference type="ChEBI" id="CHEBI:15377"/>
        <dbReference type="ChEBI" id="CHEBI:15378"/>
        <dbReference type="ChEBI" id="CHEBI:16215"/>
        <dbReference type="ChEBI" id="CHEBI:30616"/>
        <dbReference type="ChEBI" id="CHEBI:43474"/>
        <dbReference type="ChEBI" id="CHEBI:456216"/>
        <dbReference type="EC" id="7.3.2.2"/>
    </reaction>
</comment>
<comment type="subunit">
    <text evidence="1">The complex is composed of two ATP-binding proteins (PhnC), two transmembrane proteins (PhnE) and a solute-binding protein (PhnD).</text>
</comment>
<comment type="subcellular location">
    <subcellularLocation>
        <location evidence="1">Cell inner membrane</location>
        <topology evidence="1">Peripheral membrane protein</topology>
    </subcellularLocation>
</comment>
<comment type="similarity">
    <text evidence="1">Belongs to the ABC transporter superfamily. Phosphonates importer (TC 3.A.1.9.1) family.</text>
</comment>
<keyword id="KW-0067">ATP-binding</keyword>
<keyword id="KW-0997">Cell inner membrane</keyword>
<keyword id="KW-1003">Cell membrane</keyword>
<keyword id="KW-0472">Membrane</keyword>
<keyword id="KW-0547">Nucleotide-binding</keyword>
<keyword id="KW-0918">Phosphonate transport</keyword>
<keyword id="KW-1185">Reference proteome</keyword>
<keyword id="KW-1278">Translocase</keyword>
<keyword id="KW-0813">Transport</keyword>
<reference key="1">
    <citation type="journal article" date="2006" name="Nat. Biotechnol.">
        <title>Genome sequence of the bioplastic-producing 'Knallgas' bacterium Ralstonia eutropha H16.</title>
        <authorList>
            <person name="Pohlmann A."/>
            <person name="Fricke W.F."/>
            <person name="Reinecke F."/>
            <person name="Kusian B."/>
            <person name="Liesegang H."/>
            <person name="Cramm R."/>
            <person name="Eitinger T."/>
            <person name="Ewering C."/>
            <person name="Poetter M."/>
            <person name="Schwartz E."/>
            <person name="Strittmatter A."/>
            <person name="Voss I."/>
            <person name="Gottschalk G."/>
            <person name="Steinbuechel A."/>
            <person name="Friedrich B."/>
            <person name="Bowien B."/>
        </authorList>
    </citation>
    <scope>NUCLEOTIDE SEQUENCE [LARGE SCALE GENOMIC DNA]</scope>
    <source>
        <strain>ATCC 17699 / DSM 428 / KCTC 22496 / NCIMB 10442 / H16 / Stanier 337</strain>
    </source>
</reference>
<protein>
    <recommendedName>
        <fullName evidence="1">Phosphonates import ATP-binding protein PhnC 2</fullName>
        <ecNumber evidence="1">7.3.2.2</ecNumber>
    </recommendedName>
</protein>
<name>PHNC2_CUPNH</name>
<feature type="chain" id="PRO_0000274733" description="Phosphonates import ATP-binding protein PhnC 2">
    <location>
        <begin position="1"/>
        <end position="284"/>
    </location>
</feature>
<feature type="domain" description="ABC transporter" evidence="1">
    <location>
        <begin position="5"/>
        <end position="253"/>
    </location>
</feature>
<feature type="binding site" evidence="1">
    <location>
        <begin position="38"/>
        <end position="45"/>
    </location>
    <ligand>
        <name>ATP</name>
        <dbReference type="ChEBI" id="CHEBI:30616"/>
    </ligand>
</feature>
<gene>
    <name evidence="1" type="primary">phnC2</name>
    <name type="ordered locus">H16_B1296</name>
</gene>
<sequence length="284" mass="30532">MTHAIEVRGLSKSFRADRKALDDVTLHIAPGEMVALLGASGSGKSTLLRHVAGFITGDAGAGEILVNGRHVQRNGRLARNVRKVRGEIGFVFQQFNLVGRLPVITNVLVGTLARVPKWRSLLRIFKADEVQGGLDALAQVGIDDYAFQRASTLSGGQQQRAAIARTLVQNASVILADEPIASLDPESSRRVMSLLRQINRTRKVAVLVSLHQVDVAMRYCPRVVALRHGKVVYDGPSAALTPGMLRDLYGTEADELLLDSVPDEDVSTAAMPAPAMVTMNLAAA</sequence>